<keyword id="KW-0964">Secreted</keyword>
<keyword id="KW-0732">Signal</keyword>
<protein>
    <recommendedName>
        <fullName evidence="3">Cystatin Pr15a</fullName>
    </recommendedName>
    <alternativeName>
        <fullName evidence="6">Venom cystatin domain peptide Pr15a</fullName>
    </alternativeName>
</protein>
<reference key="1">
    <citation type="journal article" date="2019" name="Toxins">
        <title>Missiles of mass disruption: composition and glandular origin of venom used as a projectile defensive weapon by the assassin bug Platymeris rhadamanthus.</title>
        <authorList>
            <person name="Walker A.A."/>
            <person name="Robinson S.D."/>
            <person name="Undheim E.A.B."/>
            <person name="Jin J."/>
            <person name="Han X."/>
            <person name="Fry B.G."/>
            <person name="Vetter I."/>
            <person name="King G.F."/>
        </authorList>
    </citation>
    <scope>NUCLEOTIDE SEQUENCE [MRNA]</scope>
    <scope>TISSUE SPECIFICITY</scope>
    <source>
        <tissue>Venom gland</tissue>
    </source>
</reference>
<proteinExistence type="evidence at protein level"/>
<feature type="signal peptide" evidence="1">
    <location>
        <begin position="1"/>
        <end position="22"/>
    </location>
</feature>
<feature type="chain" id="PRO_5025639962" description="Cystatin Pr15a" evidence="4">
    <location>
        <begin position="23"/>
        <end position="114"/>
    </location>
</feature>
<feature type="domain" description="Cystatin" evidence="1">
    <location>
        <begin position="29"/>
        <end position="83"/>
    </location>
</feature>
<accession>A0A6B9KZ52</accession>
<evidence type="ECO:0000255" key="1"/>
<evidence type="ECO:0000269" key="2">
    <source>
    </source>
</evidence>
<evidence type="ECO:0000303" key="3">
    <source>
    </source>
</evidence>
<evidence type="ECO:0000305" key="4"/>
<evidence type="ECO:0000305" key="5">
    <source>
    </source>
</evidence>
<evidence type="ECO:0000312" key="6">
    <source>
        <dbReference type="EMBL" id="QHB21501.1"/>
    </source>
</evidence>
<dbReference type="EMBL" id="MN208312">
    <property type="protein sequence ID" value="QHB21501.1"/>
    <property type="molecule type" value="mRNA"/>
</dbReference>
<dbReference type="SMR" id="A0A6B9KZ52"/>
<dbReference type="GO" id="GO:0005576">
    <property type="term" value="C:extracellular region"/>
    <property type="evidence" value="ECO:0007669"/>
    <property type="project" value="UniProtKB-SubCell"/>
</dbReference>
<dbReference type="GO" id="GO:0004869">
    <property type="term" value="F:cysteine-type endopeptidase inhibitor activity"/>
    <property type="evidence" value="ECO:0007669"/>
    <property type="project" value="InterPro"/>
</dbReference>
<dbReference type="CDD" id="cd00042">
    <property type="entry name" value="CY"/>
    <property type="match status" value="1"/>
</dbReference>
<dbReference type="Gene3D" id="3.10.450.10">
    <property type="match status" value="1"/>
</dbReference>
<dbReference type="InterPro" id="IPR000010">
    <property type="entry name" value="Cystatin_dom"/>
</dbReference>
<dbReference type="InterPro" id="IPR046350">
    <property type="entry name" value="Cystatin_sf"/>
</dbReference>
<dbReference type="Pfam" id="PF00031">
    <property type="entry name" value="Cystatin"/>
    <property type="match status" value="1"/>
</dbReference>
<dbReference type="SMART" id="SM00043">
    <property type="entry name" value="CY"/>
    <property type="match status" value="1"/>
</dbReference>
<dbReference type="SUPFAM" id="SSF54403">
    <property type="entry name" value="Cystatin/monellin"/>
    <property type="match status" value="1"/>
</dbReference>
<sequence length="114" mass="12644">MFTVKLLAFMVVAVSLQHLAEATPKVCAGCPVEVDPNREDIKKSLAHVMAAKNSPDELVRIIKASTQVVNGIKYKVVFEVKNPSTNQVKICKTAYVSRPWEYEGYNVLEFGCKA</sequence>
<comment type="subcellular location">
    <subcellularLocation>
        <location evidence="5">Secreted</location>
    </subcellularLocation>
</comment>
<comment type="tissue specificity">
    <text evidence="2">Expressed by the venom gland (anterior main gland) (at protein level).</text>
</comment>
<comment type="similarity">
    <text evidence="4">Belongs to the cystatin family.</text>
</comment>
<organism>
    <name type="scientific">Platymeris rhadamanthus</name>
    <name type="common">Red spot assassin bug</name>
    <dbReference type="NCBI Taxonomy" id="1134088"/>
    <lineage>
        <taxon>Eukaryota</taxon>
        <taxon>Metazoa</taxon>
        <taxon>Ecdysozoa</taxon>
        <taxon>Arthropoda</taxon>
        <taxon>Hexapoda</taxon>
        <taxon>Insecta</taxon>
        <taxon>Pterygota</taxon>
        <taxon>Neoptera</taxon>
        <taxon>Paraneoptera</taxon>
        <taxon>Hemiptera</taxon>
        <taxon>Heteroptera</taxon>
        <taxon>Panheteroptera</taxon>
        <taxon>Cimicomorpha</taxon>
        <taxon>Reduviidae</taxon>
        <taxon>Platymeris</taxon>
    </lineage>
</organism>
<name>CYS15_PLARH</name>